<dbReference type="EMBL" id="AM040264">
    <property type="protein sequence ID" value="CAJ11142.1"/>
    <property type="molecule type" value="Genomic_DNA"/>
</dbReference>
<dbReference type="RefSeq" id="WP_002966849.1">
    <property type="nucleotide sequence ID" value="NZ_KN046823.1"/>
</dbReference>
<dbReference type="PDB" id="6NTR">
    <property type="method" value="X-ray"/>
    <property type="resolution" value="2.10 A"/>
    <property type="chains" value="A/B/C/D=29-280"/>
</dbReference>
<dbReference type="PDBsum" id="6NTR"/>
<dbReference type="SMR" id="Q2YRJ0"/>
<dbReference type="STRING" id="359391.BAB1_1186"/>
<dbReference type="GeneID" id="93016502"/>
<dbReference type="KEGG" id="bmf:BAB1_1186"/>
<dbReference type="PATRIC" id="fig|359391.11.peg.84"/>
<dbReference type="HOGENOM" id="CLU_064490_0_0_5"/>
<dbReference type="PhylomeDB" id="Q2YRJ0"/>
<dbReference type="Proteomes" id="UP000002719">
    <property type="component" value="Chromosome I"/>
</dbReference>
<dbReference type="GO" id="GO:0042597">
    <property type="term" value="C:periplasmic space"/>
    <property type="evidence" value="ECO:0000314"/>
    <property type="project" value="UniProtKB"/>
</dbReference>
<dbReference type="GO" id="GO:0043163">
    <property type="term" value="P:cell envelope organization"/>
    <property type="evidence" value="ECO:0000315"/>
    <property type="project" value="UniProtKB"/>
</dbReference>
<dbReference type="InterPro" id="IPR015000">
    <property type="entry name" value="EipB-like"/>
</dbReference>
<dbReference type="Pfam" id="PF08904">
    <property type="entry name" value="EipB_like"/>
    <property type="match status" value="1"/>
</dbReference>
<proteinExistence type="evidence at protein level"/>
<keyword id="KW-0002">3D-structure</keyword>
<keyword id="KW-1015">Disulfide bond</keyword>
<keyword id="KW-0574">Periplasm</keyword>
<keyword id="KW-1185">Reference proteome</keyword>
<keyword id="KW-0732">Signal</keyword>
<accession>Q2YRJ0</accession>
<comment type="function">
    <text evidence="2">Functions in the periplasm to maintain cell envelope integrity.</text>
</comment>
<comment type="subunit">
    <text evidence="2">Monomer.</text>
</comment>
<comment type="subcellular location">
    <subcellularLocation>
        <location evidence="2">Periplasm</location>
    </subcellularLocation>
</comment>
<comment type="disruption phenotype">
    <text evidence="2">Sensitive to the cell envelope stressors ampicillin, deoxycholate, and ethylenediaminetetraacetic acid (EDTA) (PubMed:30936371). Decreases virulence in a mouse model of infection (PubMed:30936371).</text>
</comment>
<name>EIPB_BRUA2</name>
<evidence type="ECO:0000255" key="1"/>
<evidence type="ECO:0000269" key="2">
    <source>
    </source>
</evidence>
<evidence type="ECO:0000303" key="3">
    <source>
    </source>
</evidence>
<evidence type="ECO:0000305" key="4"/>
<evidence type="ECO:0000305" key="5">
    <source>
    </source>
</evidence>
<evidence type="ECO:0000312" key="6">
    <source>
        <dbReference type="EMBL" id="CAJ11142.1"/>
    </source>
</evidence>
<evidence type="ECO:0000312" key="7">
    <source>
        <dbReference type="Proteomes" id="UP000002719"/>
    </source>
</evidence>
<evidence type="ECO:0007744" key="8">
    <source>
        <dbReference type="PDB" id="6NTR"/>
    </source>
</evidence>
<reference evidence="7" key="1">
    <citation type="journal article" date="2005" name="Infect. Immun.">
        <title>Whole-genome analyses of speciation events in pathogenic Brucellae.</title>
        <authorList>
            <person name="Chain P.S."/>
            <person name="Comerci D.J."/>
            <person name="Tolmasky M.E."/>
            <person name="Larimer F.W."/>
            <person name="Malfatti S.A."/>
            <person name="Vergez L.M."/>
            <person name="Aguero F."/>
            <person name="Land M.L."/>
            <person name="Ugalde R.A."/>
            <person name="Garcia E."/>
        </authorList>
    </citation>
    <scope>NUCLEOTIDE SEQUENCE [LARGE SCALE GENOMIC DNA]</scope>
    <source>
        <strain evidence="7">2308</strain>
    </source>
</reference>
<reference evidence="8" key="2">
    <citation type="journal article" date="2019" name="J. Bacteriol.">
        <title>Brucella Periplasmic Protein EipB Is a Molecular Determinant of Cell Envelope Integrity and Virulence.</title>
        <authorList>
            <person name="Herrou J."/>
            <person name="Willett J.W."/>
            <person name="Fiebig A."/>
            <person name="Czyz D.M."/>
            <person name="Cheng J.X."/>
            <person name="Ultee E."/>
            <person name="Briegel A."/>
            <person name="Bigelow L."/>
            <person name="Babnigg G."/>
            <person name="Kim Y."/>
            <person name="Crosson S."/>
        </authorList>
    </citation>
    <scope>X-RAY CRYSTALLOGRAPHY (2.10 ANGSTROMS) OF 29-280</scope>
    <scope>FUNCTION</scope>
    <scope>SUBUNIT</scope>
    <scope>SUBCELLULAR LOCATION</scope>
    <scope>DISRUPTION PHENOTYPE</scope>
    <scope>DISULFIDE BOND</scope>
    <scope>MUTAGENESIS OF CYS-69 AND CYS-278</scope>
</reference>
<gene>
    <name evidence="3" type="primary">eipB</name>
    <name evidence="6" type="ordered locus">BAB1_1186</name>
</gene>
<protein>
    <recommendedName>
        <fullName evidence="3">Cell envelope integrity protein EipB</fullName>
    </recommendedName>
</protein>
<sequence>MRFVRIAAAASGATVFMWAGFAGAASAASAVRLVPHRAIYDLTLDRADEKSGISGLTGRMVYEFNGSACEGYTTNFRFVTRVDMDEQPQRVTDQQTTTFEDADGKDFRFVNKTFVDKELVKEVRGDAKLEDGKTVVKLSKPKENTLDLKGTQFPTRHMEELIGKAEAGQKFYQTTLFDASEDADRVVATTVVVGKQQAVPDDETKVMGKFSKDQVWPVTIAYFDDKEQQDGMPIYRINFKLYRNGITRDLTMDYGDFSMRGKLVKLDIYDTGKNKTGCSK</sequence>
<organism evidence="7">
    <name type="scientific">Brucella abortus (strain 2308)</name>
    <dbReference type="NCBI Taxonomy" id="359391"/>
    <lineage>
        <taxon>Bacteria</taxon>
        <taxon>Pseudomonadati</taxon>
        <taxon>Pseudomonadota</taxon>
        <taxon>Alphaproteobacteria</taxon>
        <taxon>Hyphomicrobiales</taxon>
        <taxon>Brucellaceae</taxon>
        <taxon>Brucella/Ochrobactrum group</taxon>
        <taxon>Brucella</taxon>
    </lineage>
</organism>
<feature type="signal peptide" evidence="1 5">
    <location>
        <begin position="1"/>
        <end position="24"/>
    </location>
</feature>
<feature type="chain" id="PRO_5004219355" description="Cell envelope integrity protein EipB">
    <location>
        <begin position="25"/>
        <end position="280"/>
    </location>
</feature>
<feature type="disulfide bond" evidence="2">
    <location>
        <begin position="69"/>
        <end position="278"/>
    </location>
</feature>
<feature type="mutagenesis site" description="Abolishes disulfide bond formation; when associated with S-278." evidence="2">
    <original>C</original>
    <variation>S</variation>
    <location>
        <position position="69"/>
    </location>
</feature>
<feature type="mutagenesis site" description="Abolishes disulfide bond formation; when associated with S-69." evidence="2">
    <original>C</original>
    <variation>S</variation>
    <location>
        <position position="278"/>
    </location>
</feature>
<feature type="sequence conflict" description="In Ref. 2; no nucleotide entry." evidence="4" ref="2">
    <original>L</original>
    <variation>M</variation>
    <location>
        <position position="250"/>
    </location>
</feature>